<feature type="transit peptide" description="Chloroplast">
    <location>
        <begin position="1"/>
        <end position="49"/>
    </location>
</feature>
<feature type="chain" id="PRO_0000000583" description="Acyl carrier protein 3, chloroplastic">
    <location>
        <begin position="50"/>
        <end position="132"/>
    </location>
</feature>
<feature type="domain" description="Carrier" evidence="2">
    <location>
        <begin position="52"/>
        <end position="127"/>
    </location>
</feature>
<feature type="modified residue" description="O-(pantetheine 4'-phosphoryl)serine" evidence="2 3">
    <location>
        <position position="87"/>
    </location>
</feature>
<feature type="sequence conflict" description="In Ref. 2; AAA32924." evidence="4" ref="2">
    <original>SVE</original>
    <variation>TWQ</variation>
    <location>
        <begin position="104"/>
        <end position="106"/>
    </location>
</feature>
<sequence>MASIAGSAVSFAKPVKAINTNSLSFSGARRGNAFLRLQPVPMRFAVCCSAKQDTVEKVCEIVKKQLAVPEGTEVCGTTKFSDLGADSLDTVEIVMGLEEEFQISVEETSAQAIATVEDAATLIDKLVSAKSS</sequence>
<gene>
    <name type="primary">ACL1.3</name>
    <name type="synonym">ACL3</name>
</gene>
<organism>
    <name type="scientific">Hordeum vulgare</name>
    <name type="common">Barley</name>
    <dbReference type="NCBI Taxonomy" id="4513"/>
    <lineage>
        <taxon>Eukaryota</taxon>
        <taxon>Viridiplantae</taxon>
        <taxon>Streptophyta</taxon>
        <taxon>Embryophyta</taxon>
        <taxon>Tracheophyta</taxon>
        <taxon>Spermatophyta</taxon>
        <taxon>Magnoliopsida</taxon>
        <taxon>Liliopsida</taxon>
        <taxon>Poales</taxon>
        <taxon>Poaceae</taxon>
        <taxon>BOP clade</taxon>
        <taxon>Pooideae</taxon>
        <taxon>Triticodae</taxon>
        <taxon>Triticeae</taxon>
        <taxon>Hordeinae</taxon>
        <taxon>Hordeum</taxon>
    </lineage>
</organism>
<name>ACP3_HORVU</name>
<evidence type="ECO:0000250" key="1"/>
<evidence type="ECO:0000255" key="2">
    <source>
        <dbReference type="PROSITE-ProRule" id="PRU00258"/>
    </source>
</evidence>
<evidence type="ECO:0000269" key="3">
    <source ref="2"/>
</evidence>
<evidence type="ECO:0000305" key="4"/>
<comment type="function">
    <text>Carrier of the growing fatty acid chain in fatty acid biosynthesis.</text>
</comment>
<comment type="pathway">
    <text>Lipid metabolism; fatty acid biosynthesis.</text>
</comment>
<comment type="subcellular location">
    <subcellularLocation>
        <location>Plastid</location>
        <location>Chloroplast</location>
    </subcellularLocation>
</comment>
<comment type="PTM">
    <text evidence="1">4'-phosphopantetheine is transferred from CoA to a specific serine of apo-ACP by acpS. This modification is essential for activity because fatty acids are bound in thioester linkage to the sulfhydryl of the prosthetic group (By similarity).</text>
</comment>
<comment type="similarity">
    <text evidence="4">Belongs to the acyl carrier protein (ACP) family.</text>
</comment>
<proteinExistence type="evidence at protein level"/>
<keyword id="KW-0150">Chloroplast</keyword>
<keyword id="KW-0275">Fatty acid biosynthesis</keyword>
<keyword id="KW-0276">Fatty acid metabolism</keyword>
<keyword id="KW-0444">Lipid biosynthesis</keyword>
<keyword id="KW-0443">Lipid metabolism</keyword>
<keyword id="KW-0596">Phosphopantetheine</keyword>
<keyword id="KW-0597">Phosphoprotein</keyword>
<keyword id="KW-0934">Plastid</keyword>
<keyword id="KW-0809">Transit peptide</keyword>
<accession>P15543</accession>
<reference key="1">
    <citation type="journal article" date="1991" name="Mol. Gen. Genet.">
        <title>The barley genes Acl1 and Acl3 encoding acyl carrier proteins I and III are located on different chromosomes.</title>
        <authorList>
            <person name="Hansen L."/>
            <person name="von Wettstein-Knowles P."/>
        </authorList>
    </citation>
    <scope>NUCLEOTIDE SEQUENCE [GENOMIC DNA]</scope>
</reference>
<reference key="2">
    <citation type="journal article" date="1987" name="Carlsberg Res. Commun.">
        <title>Three cDNA clones for barley leaf acyl carrier proteins I and III.</title>
        <authorList>
            <person name="Hansen L."/>
        </authorList>
    </citation>
    <scope>NUCLEOTIDE SEQUENCE [MRNA] OF 23-132</scope>
    <scope>PHOSPHOPANTETHEINYLATION AT SER-87</scope>
</reference>
<dbReference type="EMBL" id="M58754">
    <property type="protein sequence ID" value="AAA32922.1"/>
    <property type="molecule type" value="Genomic_DNA"/>
</dbReference>
<dbReference type="EMBL" id="M24426">
    <property type="protein sequence ID" value="AAA32924.1"/>
    <property type="molecule type" value="mRNA"/>
</dbReference>
<dbReference type="PIR" id="S17928">
    <property type="entry name" value="S17928"/>
</dbReference>
<dbReference type="SMR" id="P15543"/>
<dbReference type="UniPathway" id="UPA00094"/>
<dbReference type="ExpressionAtlas" id="P15543">
    <property type="expression patterns" value="baseline and differential"/>
</dbReference>
<dbReference type="GO" id="GO:0009507">
    <property type="term" value="C:chloroplast"/>
    <property type="evidence" value="ECO:0007669"/>
    <property type="project" value="UniProtKB-SubCell"/>
</dbReference>
<dbReference type="GO" id="GO:0000036">
    <property type="term" value="F:acyl carrier activity"/>
    <property type="evidence" value="ECO:0007669"/>
    <property type="project" value="InterPro"/>
</dbReference>
<dbReference type="Gene3D" id="1.10.1200.10">
    <property type="entry name" value="ACP-like"/>
    <property type="match status" value="1"/>
</dbReference>
<dbReference type="HAMAP" id="MF_01217">
    <property type="entry name" value="Acyl_carrier"/>
    <property type="match status" value="1"/>
</dbReference>
<dbReference type="InterPro" id="IPR003231">
    <property type="entry name" value="ACP"/>
</dbReference>
<dbReference type="InterPro" id="IPR036736">
    <property type="entry name" value="ACP-like_sf"/>
</dbReference>
<dbReference type="InterPro" id="IPR044813">
    <property type="entry name" value="ACP_chloroplastic"/>
</dbReference>
<dbReference type="InterPro" id="IPR009081">
    <property type="entry name" value="PP-bd_ACP"/>
</dbReference>
<dbReference type="InterPro" id="IPR006162">
    <property type="entry name" value="Ppantetheine_attach_site"/>
</dbReference>
<dbReference type="NCBIfam" id="TIGR00517">
    <property type="entry name" value="acyl_carrier"/>
    <property type="match status" value="1"/>
</dbReference>
<dbReference type="PANTHER" id="PTHR46153">
    <property type="entry name" value="ACYL CARRIER PROTEIN"/>
    <property type="match status" value="1"/>
</dbReference>
<dbReference type="PANTHER" id="PTHR46153:SF14">
    <property type="entry name" value="ACYL CARRIER PROTEIN"/>
    <property type="match status" value="1"/>
</dbReference>
<dbReference type="Pfam" id="PF00550">
    <property type="entry name" value="PP-binding"/>
    <property type="match status" value="1"/>
</dbReference>
<dbReference type="SUPFAM" id="SSF47336">
    <property type="entry name" value="ACP-like"/>
    <property type="match status" value="1"/>
</dbReference>
<dbReference type="PROSITE" id="PS50075">
    <property type="entry name" value="CARRIER"/>
    <property type="match status" value="1"/>
</dbReference>
<dbReference type="PROSITE" id="PS00012">
    <property type="entry name" value="PHOSPHOPANTETHEINE"/>
    <property type="match status" value="1"/>
</dbReference>
<protein>
    <recommendedName>
        <fullName>Acyl carrier protein 3, chloroplastic</fullName>
    </recommendedName>
    <alternativeName>
        <fullName>Acyl carrier protein III</fullName>
        <shortName>ACP III</shortName>
    </alternativeName>
</protein>